<accession>P83859</accession>
<accession>A3KFJ6</accession>
<accession>Q495K6</accession>
<organism evidence="8">
    <name type="scientific">Homo sapiens</name>
    <name type="common">Human</name>
    <dbReference type="NCBI Taxonomy" id="9606"/>
    <lineage>
        <taxon>Eukaryota</taxon>
        <taxon>Metazoa</taxon>
        <taxon>Chordata</taxon>
        <taxon>Craniata</taxon>
        <taxon>Vertebrata</taxon>
        <taxon>Euteleostomi</taxon>
        <taxon>Mammalia</taxon>
        <taxon>Eutheria</taxon>
        <taxon>Euarchontoglires</taxon>
        <taxon>Primates</taxon>
        <taxon>Haplorrhini</taxon>
        <taxon>Catarrhini</taxon>
        <taxon>Hominidae</taxon>
        <taxon>Homo</taxon>
    </lineage>
</organism>
<gene>
    <name evidence="9" type="primary">QRFP</name>
</gene>
<feature type="signal peptide" evidence="3">
    <location>
        <begin position="1"/>
        <end position="18"/>
    </location>
</feature>
<feature type="propeptide" id="PRO_0000010086" evidence="3 7">
    <location>
        <begin position="19"/>
        <end position="90"/>
    </location>
</feature>
<feature type="peptide" id="PRO_0000010087" description="QRF-amide" evidence="7">
    <location>
        <begin position="91"/>
        <end position="133"/>
    </location>
</feature>
<feature type="modified residue" description="Pyrrolidone carboxylic acid" evidence="2 7">
    <location>
        <position position="91"/>
    </location>
</feature>
<feature type="modified residue" description="Phenylalanine amide" evidence="1">
    <location>
        <position position="133"/>
    </location>
</feature>
<feature type="sequence variant" id="VAR_049184" description="In dbSNP:rs12340616.">
    <original>L</original>
    <variation>H</variation>
    <location>
        <position position="68"/>
    </location>
</feature>
<feature type="helix" evidence="10">
    <location>
        <begin position="112"/>
        <end position="120"/>
    </location>
</feature>
<sequence>MVRPYPLIYFLFLPLGACFPLLDRREPTDAMGGLGAGERWADLAMGPRPHSVWGSSRWLRASQPQALLVIARGLQTSGREHAGCRFRFGRQDEGSEATGFLPAAGEKTSGPLGNLAEELNGYSRKKGGFSFRFGRR</sequence>
<name>OX26_HUMAN</name>
<evidence type="ECO:0000250" key="1"/>
<evidence type="ECO:0000250" key="2">
    <source>
        <dbReference type="UniProtKB" id="P83860"/>
    </source>
</evidence>
<evidence type="ECO:0000255" key="3"/>
<evidence type="ECO:0000269" key="4">
    <source>
    </source>
</evidence>
<evidence type="ECO:0000269" key="5">
    <source>
    </source>
</evidence>
<evidence type="ECO:0000269" key="6">
    <source>
    </source>
</evidence>
<evidence type="ECO:0000305" key="7"/>
<evidence type="ECO:0000312" key="8">
    <source>
        <dbReference type="EMBL" id="AAR24354.1"/>
    </source>
</evidence>
<evidence type="ECO:0000312" key="9">
    <source>
        <dbReference type="EMBL" id="BAC98934.1"/>
    </source>
</evidence>
<evidence type="ECO:0007829" key="10">
    <source>
        <dbReference type="PDB" id="8ZH8"/>
    </source>
</evidence>
<dbReference type="EMBL" id="AB109625">
    <property type="protein sequence ID" value="BAC98934.1"/>
    <property type="molecule type" value="mRNA"/>
</dbReference>
<dbReference type="EMBL" id="AY438326">
    <property type="protein sequence ID" value="AAR24354.1"/>
    <property type="molecule type" value="Genomic_DNA"/>
</dbReference>
<dbReference type="EMBL" id="AL161733">
    <property type="status" value="NOT_ANNOTATED_CDS"/>
    <property type="molecule type" value="Genomic_DNA"/>
</dbReference>
<dbReference type="EMBL" id="BC101127">
    <property type="protein sequence ID" value="AAI01128.1"/>
    <property type="molecule type" value="mRNA"/>
</dbReference>
<dbReference type="CCDS" id="CCDS6936.1"/>
<dbReference type="RefSeq" id="NP_937823.1">
    <property type="nucleotide sequence ID" value="NM_198180.3"/>
</dbReference>
<dbReference type="PDB" id="8ZH8">
    <property type="method" value="EM"/>
    <property type="resolution" value="3.19 A"/>
    <property type="chains" value="Q=108-133"/>
</dbReference>
<dbReference type="PDBsum" id="8ZH8"/>
<dbReference type="EMDB" id="EMD-60096"/>
<dbReference type="SMR" id="P83859"/>
<dbReference type="BioGRID" id="131411">
    <property type="interactions" value="1"/>
</dbReference>
<dbReference type="FunCoup" id="P83859">
    <property type="interactions" value="371"/>
</dbReference>
<dbReference type="STRING" id="9606.ENSP00000485512"/>
<dbReference type="BioMuta" id="QRFP"/>
<dbReference type="DMDM" id="50400831"/>
<dbReference type="PaxDb" id="9606-ENSP00000485512"/>
<dbReference type="Antibodypedia" id="48446">
    <property type="antibodies" value="22 antibodies from 6 providers"/>
</dbReference>
<dbReference type="DNASU" id="347148"/>
<dbReference type="Ensembl" id="ENST00000343079.1">
    <property type="protein sequence ID" value="ENSP00000345487.1"/>
    <property type="gene ID" value="ENSG00000188710.3"/>
</dbReference>
<dbReference type="Ensembl" id="ENST00000623824.2">
    <property type="protein sequence ID" value="ENSP00000485512.1"/>
    <property type="gene ID" value="ENSG00000188710.3"/>
</dbReference>
<dbReference type="GeneID" id="347148"/>
<dbReference type="KEGG" id="hsa:347148"/>
<dbReference type="MANE-Select" id="ENST00000623824.2">
    <property type="protein sequence ID" value="ENSP00000485512.1"/>
    <property type="RefSeq nucleotide sequence ID" value="NM_198180.3"/>
    <property type="RefSeq protein sequence ID" value="NP_937823.1"/>
</dbReference>
<dbReference type="UCSC" id="uc011mcb.2">
    <property type="organism name" value="human"/>
</dbReference>
<dbReference type="AGR" id="HGNC:29982"/>
<dbReference type="CTD" id="347148"/>
<dbReference type="DisGeNET" id="347148"/>
<dbReference type="GeneCards" id="QRFP"/>
<dbReference type="HGNC" id="HGNC:29982">
    <property type="gene designation" value="QRFP"/>
</dbReference>
<dbReference type="HPA" id="ENSG00000188710">
    <property type="expression patterns" value="Low tissue specificity"/>
</dbReference>
<dbReference type="MIM" id="609795">
    <property type="type" value="gene"/>
</dbReference>
<dbReference type="neXtProt" id="NX_P83859"/>
<dbReference type="OpenTargets" id="ENSG00000188710"/>
<dbReference type="PharmGKB" id="PA162400554"/>
<dbReference type="VEuPathDB" id="HostDB:ENSG00000188710"/>
<dbReference type="eggNOG" id="ENOG502S84J">
    <property type="taxonomic scope" value="Eukaryota"/>
</dbReference>
<dbReference type="GeneTree" id="ENSGT00390000015756"/>
<dbReference type="HOGENOM" id="CLU_155319_0_0_1"/>
<dbReference type="InParanoid" id="P83859"/>
<dbReference type="OMA" id="TGREMSW"/>
<dbReference type="OrthoDB" id="9831857at2759"/>
<dbReference type="PAN-GO" id="P83859">
    <property type="GO annotations" value="4 GO annotations based on evolutionary models"/>
</dbReference>
<dbReference type="PhylomeDB" id="P83859"/>
<dbReference type="TreeFam" id="TF336317"/>
<dbReference type="PathwayCommons" id="P83859"/>
<dbReference type="Reactome" id="R-HSA-389397">
    <property type="pathway name" value="Orexin and neuropeptides FF and QRFP bind to their respective receptors"/>
</dbReference>
<dbReference type="Reactome" id="R-HSA-416476">
    <property type="pathway name" value="G alpha (q) signalling events"/>
</dbReference>
<dbReference type="BioGRID-ORCS" id="347148">
    <property type="hits" value="21 hits in 1135 CRISPR screens"/>
</dbReference>
<dbReference type="GeneWiki" id="QRFP"/>
<dbReference type="GenomeRNAi" id="347148"/>
<dbReference type="Pharos" id="P83859">
    <property type="development level" value="Tbio"/>
</dbReference>
<dbReference type="PRO" id="PR:P83859"/>
<dbReference type="Proteomes" id="UP000005640">
    <property type="component" value="Chromosome 9"/>
</dbReference>
<dbReference type="RNAct" id="P83859">
    <property type="molecule type" value="protein"/>
</dbReference>
<dbReference type="Bgee" id="ENSG00000188710">
    <property type="expression patterns" value="Expressed in male germ line stem cell (sensu Vertebrata) in testis and 88 other cell types or tissues"/>
</dbReference>
<dbReference type="GO" id="GO:0005576">
    <property type="term" value="C:extracellular region"/>
    <property type="evidence" value="ECO:0000304"/>
    <property type="project" value="Reactome"/>
</dbReference>
<dbReference type="GO" id="GO:0005184">
    <property type="term" value="F:neuropeptide hormone activity"/>
    <property type="evidence" value="ECO:0000314"/>
    <property type="project" value="UniProtKB"/>
</dbReference>
<dbReference type="GO" id="GO:0031854">
    <property type="term" value="F:orexigenic neuropeptide QRFP receptor binding"/>
    <property type="evidence" value="ECO:0000250"/>
    <property type="project" value="UniProtKB"/>
</dbReference>
<dbReference type="GO" id="GO:0007625">
    <property type="term" value="P:grooming behavior"/>
    <property type="evidence" value="ECO:0007669"/>
    <property type="project" value="Ensembl"/>
</dbReference>
<dbReference type="GO" id="GO:0007626">
    <property type="term" value="P:locomotory behavior"/>
    <property type="evidence" value="ECO:0000250"/>
    <property type="project" value="UniProtKB"/>
</dbReference>
<dbReference type="GO" id="GO:0007218">
    <property type="term" value="P:neuropeptide signaling pathway"/>
    <property type="evidence" value="ECO:0000314"/>
    <property type="project" value="UniProtKB"/>
</dbReference>
<dbReference type="GO" id="GO:0045777">
    <property type="term" value="P:positive regulation of blood pressure"/>
    <property type="evidence" value="ECO:0000250"/>
    <property type="project" value="UniProtKB"/>
</dbReference>
<dbReference type="GO" id="GO:0060259">
    <property type="term" value="P:regulation of feeding behavior"/>
    <property type="evidence" value="ECO:0000250"/>
    <property type="project" value="UniProtKB"/>
</dbReference>
<dbReference type="InterPro" id="IPR024565">
    <property type="entry name" value="P518"/>
</dbReference>
<dbReference type="PANTHER" id="PTHR36476">
    <property type="entry name" value="OREXIGENIC NEUROPEPTIDE QRFP"/>
    <property type="match status" value="1"/>
</dbReference>
<dbReference type="PANTHER" id="PTHR36476:SF1">
    <property type="entry name" value="OREXIGENIC NEUROPEPTIDE QRFP"/>
    <property type="match status" value="1"/>
</dbReference>
<dbReference type="Pfam" id="PF11109">
    <property type="entry name" value="RFamide_26RFa"/>
    <property type="match status" value="1"/>
</dbReference>
<reference evidence="7" key="1">
    <citation type="journal article" date="2003" name="J. Biol. Chem.">
        <title>Identification and characterization of a novel RF-amide peptide ligand for orphan G-protein-coupled receptor SP9155.</title>
        <authorList>
            <person name="Jiang Y."/>
            <person name="Luo L."/>
            <person name="Gustafson E.L."/>
            <person name="Yadav D."/>
            <person name="Laverty M."/>
            <person name="Murgolo N."/>
            <person name="Vassileva G."/>
            <person name="Zeng M."/>
            <person name="Laz T.M."/>
            <person name="Behan J."/>
            <person name="Qiu P."/>
            <person name="Wang L."/>
            <person name="Wang S."/>
            <person name="Bayne M."/>
            <person name="Greene J."/>
            <person name="Monsma F.J. Jr."/>
            <person name="Zhang F.L."/>
        </authorList>
    </citation>
    <scope>NUCLEOTIDE SEQUENCE [MRNA]</scope>
    <scope>TISSUE SPECIFICITY</scope>
</reference>
<reference evidence="7" key="2">
    <citation type="journal article" date="2003" name="J. Biol. Chem.">
        <title>A new peptidic ligand and its receptor regulating adrenal function in rats.</title>
        <authorList>
            <person name="Fukusumi S."/>
            <person name="Yoshida H."/>
            <person name="Fujii R."/>
            <person name="Maruyama M."/>
            <person name="Komatsu H."/>
            <person name="Habata Y."/>
            <person name="Shintani Y."/>
            <person name="Hinuma S."/>
            <person name="Fujino M."/>
        </authorList>
    </citation>
    <scope>NUCLEOTIDE SEQUENCE [MRNA]</scope>
    <scope>FUNCTION</scope>
    <source>
        <tissue evidence="4">Brain</tissue>
    </source>
</reference>
<reference evidence="7" key="3">
    <citation type="journal article" date="2003" name="Proc. Natl. Acad. Sci. U.S.A.">
        <title>Identification of 26RFa, a hypothalamic neuropeptide of the RFamide peptide family with orexigenic activity.</title>
        <authorList>
            <person name="Chartrel N."/>
            <person name="Dujardin C."/>
            <person name="Anouar Y."/>
            <person name="Leprince J."/>
            <person name="Decker A."/>
            <person name="Clerens S."/>
            <person name="Do-Rego J.-C."/>
            <person name="Vandesande F."/>
            <person name="Llorens-Cortes C."/>
            <person name="Costentin J."/>
            <person name="Beauvillain J.-C."/>
            <person name="Vaudry H."/>
        </authorList>
    </citation>
    <scope>NUCLEOTIDE SEQUENCE [GENOMIC DNA]</scope>
    <scope>FUNCTION</scope>
    <source>
        <tissue evidence="8">Hypothalamus</tissue>
    </source>
</reference>
<reference key="4">
    <citation type="journal article" date="2003" name="Nature">
        <title>The DNA sequence and analysis of human chromosome 6.</title>
        <authorList>
            <person name="Mungall A.J."/>
            <person name="Palmer S.A."/>
            <person name="Sims S.K."/>
            <person name="Edwards C.A."/>
            <person name="Ashurst J.L."/>
            <person name="Wilming L."/>
            <person name="Jones M.C."/>
            <person name="Horton R."/>
            <person name="Hunt S.E."/>
            <person name="Scott C.E."/>
            <person name="Gilbert J.G.R."/>
            <person name="Clamp M.E."/>
            <person name="Bethel G."/>
            <person name="Milne S."/>
            <person name="Ainscough R."/>
            <person name="Almeida J.P."/>
            <person name="Ambrose K.D."/>
            <person name="Andrews T.D."/>
            <person name="Ashwell R.I.S."/>
            <person name="Babbage A.K."/>
            <person name="Bagguley C.L."/>
            <person name="Bailey J."/>
            <person name="Banerjee R."/>
            <person name="Barker D.J."/>
            <person name="Barlow K.F."/>
            <person name="Bates K."/>
            <person name="Beare D.M."/>
            <person name="Beasley H."/>
            <person name="Beasley O."/>
            <person name="Bird C.P."/>
            <person name="Blakey S.E."/>
            <person name="Bray-Allen S."/>
            <person name="Brook J."/>
            <person name="Brown A.J."/>
            <person name="Brown J.Y."/>
            <person name="Burford D.C."/>
            <person name="Burrill W."/>
            <person name="Burton J."/>
            <person name="Carder C."/>
            <person name="Carter N.P."/>
            <person name="Chapman J.C."/>
            <person name="Clark S.Y."/>
            <person name="Clark G."/>
            <person name="Clee C.M."/>
            <person name="Clegg S."/>
            <person name="Cobley V."/>
            <person name="Collier R.E."/>
            <person name="Collins J.E."/>
            <person name="Colman L.K."/>
            <person name="Corby N.R."/>
            <person name="Coville G.J."/>
            <person name="Culley K.M."/>
            <person name="Dhami P."/>
            <person name="Davies J."/>
            <person name="Dunn M."/>
            <person name="Earthrowl M.E."/>
            <person name="Ellington A.E."/>
            <person name="Evans K.A."/>
            <person name="Faulkner L."/>
            <person name="Francis M.D."/>
            <person name="Frankish A."/>
            <person name="Frankland J."/>
            <person name="French L."/>
            <person name="Garner P."/>
            <person name="Garnett J."/>
            <person name="Ghori M.J."/>
            <person name="Gilby L.M."/>
            <person name="Gillson C.J."/>
            <person name="Glithero R.J."/>
            <person name="Grafham D.V."/>
            <person name="Grant M."/>
            <person name="Gribble S."/>
            <person name="Griffiths C."/>
            <person name="Griffiths M.N.D."/>
            <person name="Hall R."/>
            <person name="Halls K.S."/>
            <person name="Hammond S."/>
            <person name="Harley J.L."/>
            <person name="Hart E.A."/>
            <person name="Heath P.D."/>
            <person name="Heathcott R."/>
            <person name="Holmes S.J."/>
            <person name="Howden P.J."/>
            <person name="Howe K.L."/>
            <person name="Howell G.R."/>
            <person name="Huckle E."/>
            <person name="Humphray S.J."/>
            <person name="Humphries M.D."/>
            <person name="Hunt A.R."/>
            <person name="Johnson C.M."/>
            <person name="Joy A.A."/>
            <person name="Kay M."/>
            <person name="Keenan S.J."/>
            <person name="Kimberley A.M."/>
            <person name="King A."/>
            <person name="Laird G.K."/>
            <person name="Langford C."/>
            <person name="Lawlor S."/>
            <person name="Leongamornlert D.A."/>
            <person name="Leversha M."/>
            <person name="Lloyd C.R."/>
            <person name="Lloyd D.M."/>
            <person name="Loveland J.E."/>
            <person name="Lovell J."/>
            <person name="Martin S."/>
            <person name="Mashreghi-Mohammadi M."/>
            <person name="Maslen G.L."/>
            <person name="Matthews L."/>
            <person name="McCann O.T."/>
            <person name="McLaren S.J."/>
            <person name="McLay K."/>
            <person name="McMurray A."/>
            <person name="Moore M.J.F."/>
            <person name="Mullikin J.C."/>
            <person name="Niblett D."/>
            <person name="Nickerson T."/>
            <person name="Novik K.L."/>
            <person name="Oliver K."/>
            <person name="Overton-Larty E.K."/>
            <person name="Parker A."/>
            <person name="Patel R."/>
            <person name="Pearce A.V."/>
            <person name="Peck A.I."/>
            <person name="Phillimore B.J.C.T."/>
            <person name="Phillips S."/>
            <person name="Plumb R.W."/>
            <person name="Porter K.M."/>
            <person name="Ramsey Y."/>
            <person name="Ranby S.A."/>
            <person name="Rice C.M."/>
            <person name="Ross M.T."/>
            <person name="Searle S.M."/>
            <person name="Sehra H.K."/>
            <person name="Sheridan E."/>
            <person name="Skuce C.D."/>
            <person name="Smith S."/>
            <person name="Smith M."/>
            <person name="Spraggon L."/>
            <person name="Squares S.L."/>
            <person name="Steward C.A."/>
            <person name="Sycamore N."/>
            <person name="Tamlyn-Hall G."/>
            <person name="Tester J."/>
            <person name="Theaker A.J."/>
            <person name="Thomas D.W."/>
            <person name="Thorpe A."/>
            <person name="Tracey A."/>
            <person name="Tromans A."/>
            <person name="Tubby B."/>
            <person name="Wall M."/>
            <person name="Wallis J.M."/>
            <person name="West A.P."/>
            <person name="White S.S."/>
            <person name="Whitehead S.L."/>
            <person name="Whittaker H."/>
            <person name="Wild A."/>
            <person name="Willey D.J."/>
            <person name="Wilmer T.E."/>
            <person name="Wood J.M."/>
            <person name="Wray P.W."/>
            <person name="Wyatt J.C."/>
            <person name="Young L."/>
            <person name="Younger R.M."/>
            <person name="Bentley D.R."/>
            <person name="Coulson A."/>
            <person name="Durbin R.M."/>
            <person name="Hubbard T."/>
            <person name="Sulston J.E."/>
            <person name="Dunham I."/>
            <person name="Rogers J."/>
            <person name="Beck S."/>
        </authorList>
    </citation>
    <scope>NUCLEOTIDE SEQUENCE [LARGE SCALE GENOMIC DNA]</scope>
</reference>
<reference key="5">
    <citation type="journal article" date="2004" name="Genome Res.">
        <title>The status, quality, and expansion of the NIH full-length cDNA project: the Mammalian Gene Collection (MGC).</title>
        <authorList>
            <consortium name="The MGC Project Team"/>
        </authorList>
    </citation>
    <scope>NUCLEOTIDE SEQUENCE [LARGE SCALE MRNA]</scope>
</reference>
<comment type="function">
    <text evidence="1 5 6">Stimulates feeding behavior, metabolic rate and locomotor activity and increases blood pressure. May have orexigenic activity. May promote aldosterone secretion by the adrenal gland (By similarity).</text>
</comment>
<comment type="subunit">
    <text evidence="1">Ligand for the G-protein coupled receptor QRFPR/GPR103.</text>
</comment>
<comment type="subcellular location">
    <subcellularLocation>
        <location>Secreted</location>
    </subcellularLocation>
</comment>
<comment type="tissue specificity">
    <text evidence="4">Expressed widely in the brain with highest expression levels in the cerebellum, medulla, pituitary, retina, vestibular nucleus, and white matter. Also expressed in the bladder, colon, coronary artery, parathyroid gland, prostate, testis, and thyroid.</text>
</comment>
<comment type="similarity">
    <text evidence="7">Belongs to the RFamide neuropeptide family.</text>
</comment>
<protein>
    <recommendedName>
        <fullName>Orexigenic neuropeptide QRFP</fullName>
    </recommendedName>
    <alternativeName>
        <fullName>P518</fullName>
    </alternativeName>
    <component>
        <recommendedName>
            <fullName>QRF-amide</fullName>
        </recommendedName>
        <alternativeName>
            <fullName>Neuropeptide RF-amide</fullName>
        </alternativeName>
        <alternativeName>
            <fullName>Pyroglutamylated arginine-phenylalanine-amide peptide</fullName>
        </alternativeName>
    </component>
</protein>
<keyword id="KW-0002">3D-structure</keyword>
<keyword id="KW-0027">Amidation</keyword>
<keyword id="KW-0527">Neuropeptide</keyword>
<keyword id="KW-0873">Pyrrolidone carboxylic acid</keyword>
<keyword id="KW-1185">Reference proteome</keyword>
<keyword id="KW-0964">Secreted</keyword>
<keyword id="KW-0732">Signal</keyword>
<proteinExistence type="evidence at protein level"/>